<accession>Q54MH6</accession>
<reference key="1">
    <citation type="journal article" date="2005" name="Nature">
        <title>The genome of the social amoeba Dictyostelium discoideum.</title>
        <authorList>
            <person name="Eichinger L."/>
            <person name="Pachebat J.A."/>
            <person name="Gloeckner G."/>
            <person name="Rajandream M.A."/>
            <person name="Sucgang R."/>
            <person name="Berriman M."/>
            <person name="Song J."/>
            <person name="Olsen R."/>
            <person name="Szafranski K."/>
            <person name="Xu Q."/>
            <person name="Tunggal B."/>
            <person name="Kummerfeld S."/>
            <person name="Madera M."/>
            <person name="Konfortov B.A."/>
            <person name="Rivero F."/>
            <person name="Bankier A.T."/>
            <person name="Lehmann R."/>
            <person name="Hamlin N."/>
            <person name="Davies R."/>
            <person name="Gaudet P."/>
            <person name="Fey P."/>
            <person name="Pilcher K."/>
            <person name="Chen G."/>
            <person name="Saunders D."/>
            <person name="Sodergren E.J."/>
            <person name="Davis P."/>
            <person name="Kerhornou A."/>
            <person name="Nie X."/>
            <person name="Hall N."/>
            <person name="Anjard C."/>
            <person name="Hemphill L."/>
            <person name="Bason N."/>
            <person name="Farbrother P."/>
            <person name="Desany B."/>
            <person name="Just E."/>
            <person name="Morio T."/>
            <person name="Rost R."/>
            <person name="Churcher C.M."/>
            <person name="Cooper J."/>
            <person name="Haydock S."/>
            <person name="van Driessche N."/>
            <person name="Cronin A."/>
            <person name="Goodhead I."/>
            <person name="Muzny D.M."/>
            <person name="Mourier T."/>
            <person name="Pain A."/>
            <person name="Lu M."/>
            <person name="Harper D."/>
            <person name="Lindsay R."/>
            <person name="Hauser H."/>
            <person name="James K.D."/>
            <person name="Quiles M."/>
            <person name="Madan Babu M."/>
            <person name="Saito T."/>
            <person name="Buchrieser C."/>
            <person name="Wardroper A."/>
            <person name="Felder M."/>
            <person name="Thangavelu M."/>
            <person name="Johnson D."/>
            <person name="Knights A."/>
            <person name="Loulseged H."/>
            <person name="Mungall K.L."/>
            <person name="Oliver K."/>
            <person name="Price C."/>
            <person name="Quail M.A."/>
            <person name="Urushihara H."/>
            <person name="Hernandez J."/>
            <person name="Rabbinowitsch E."/>
            <person name="Steffen D."/>
            <person name="Sanders M."/>
            <person name="Ma J."/>
            <person name="Kohara Y."/>
            <person name="Sharp S."/>
            <person name="Simmonds M.N."/>
            <person name="Spiegler S."/>
            <person name="Tivey A."/>
            <person name="Sugano S."/>
            <person name="White B."/>
            <person name="Walker D."/>
            <person name="Woodward J.R."/>
            <person name="Winckler T."/>
            <person name="Tanaka Y."/>
            <person name="Shaulsky G."/>
            <person name="Schleicher M."/>
            <person name="Weinstock G.M."/>
            <person name="Rosenthal A."/>
            <person name="Cox E.C."/>
            <person name="Chisholm R.L."/>
            <person name="Gibbs R.A."/>
            <person name="Loomis W.F."/>
            <person name="Platzer M."/>
            <person name="Kay R.R."/>
            <person name="Williams J.G."/>
            <person name="Dear P.H."/>
            <person name="Noegel A.A."/>
            <person name="Barrell B.G."/>
            <person name="Kuspa A."/>
        </authorList>
    </citation>
    <scope>NUCLEOTIDE SEQUENCE [LARGE SCALE GENOMIC DNA]</scope>
    <source>
        <strain>AX4</strain>
    </source>
</reference>
<dbReference type="EMBL" id="AAFI02000082">
    <property type="protein sequence ID" value="EAL64458.1"/>
    <property type="molecule type" value="Genomic_DNA"/>
</dbReference>
<dbReference type="RefSeq" id="XP_638014.1">
    <property type="nucleotide sequence ID" value="XM_632922.1"/>
</dbReference>
<dbReference type="SMR" id="Q54MH6"/>
<dbReference type="FunCoup" id="Q54MH6">
    <property type="interactions" value="1002"/>
</dbReference>
<dbReference type="STRING" id="44689.Q54MH6"/>
<dbReference type="PaxDb" id="44689-DDB0191415"/>
<dbReference type="EnsemblProtists" id="EAL64458">
    <property type="protein sequence ID" value="EAL64458"/>
    <property type="gene ID" value="DDB_G0285847"/>
</dbReference>
<dbReference type="GeneID" id="8625365"/>
<dbReference type="KEGG" id="ddi:DDB_G0285847"/>
<dbReference type="dictyBase" id="DDB_G0285847">
    <property type="gene designation" value="rbbE"/>
</dbReference>
<dbReference type="VEuPathDB" id="AmoebaDB:DDB_G0285847"/>
<dbReference type="eggNOG" id="KOG1273">
    <property type="taxonomic scope" value="Eukaryota"/>
</dbReference>
<dbReference type="HOGENOM" id="CLU_032142_2_2_1"/>
<dbReference type="InParanoid" id="Q54MH6"/>
<dbReference type="OMA" id="DYEDDIM"/>
<dbReference type="PhylomeDB" id="Q54MH6"/>
<dbReference type="Reactome" id="R-DDI-3214841">
    <property type="pathway name" value="PKMTs methylate histone lysines"/>
</dbReference>
<dbReference type="Reactome" id="R-DDI-8951664">
    <property type="pathway name" value="Neddylation"/>
</dbReference>
<dbReference type="Reactome" id="R-DDI-9772755">
    <property type="pathway name" value="Formation of WDR5-containing histone-modifying complexes"/>
</dbReference>
<dbReference type="PRO" id="PR:Q54MH6"/>
<dbReference type="Proteomes" id="UP000002195">
    <property type="component" value="Chromosome 4"/>
</dbReference>
<dbReference type="GO" id="GO:0005634">
    <property type="term" value="C:nucleus"/>
    <property type="evidence" value="ECO:0000250"/>
    <property type="project" value="dictyBase"/>
</dbReference>
<dbReference type="GO" id="GO:0048188">
    <property type="term" value="C:Set1C/COMPASS complex"/>
    <property type="evidence" value="ECO:0000318"/>
    <property type="project" value="GO_Central"/>
</dbReference>
<dbReference type="Gene3D" id="2.130.10.10">
    <property type="entry name" value="YVTN repeat-like/Quinoprotein amine dehydrogenase"/>
    <property type="match status" value="2"/>
</dbReference>
<dbReference type="InterPro" id="IPR024977">
    <property type="entry name" value="Apc4-like_WD40_dom"/>
</dbReference>
<dbReference type="InterPro" id="IPR037850">
    <property type="entry name" value="RBBP5/Swd1"/>
</dbReference>
<dbReference type="InterPro" id="IPR015943">
    <property type="entry name" value="WD40/YVTN_repeat-like_dom_sf"/>
</dbReference>
<dbReference type="InterPro" id="IPR019775">
    <property type="entry name" value="WD40_repeat_CS"/>
</dbReference>
<dbReference type="InterPro" id="IPR036322">
    <property type="entry name" value="WD40_repeat_dom_sf"/>
</dbReference>
<dbReference type="InterPro" id="IPR001680">
    <property type="entry name" value="WD40_rpt"/>
</dbReference>
<dbReference type="PANTHER" id="PTHR44040">
    <property type="entry name" value="RETINOBLASTOMA-BINDING PROTEIN 5"/>
    <property type="match status" value="1"/>
</dbReference>
<dbReference type="PANTHER" id="PTHR44040:SF1">
    <property type="entry name" value="RETINOBLASTOMA-BINDING PROTEIN 5"/>
    <property type="match status" value="1"/>
</dbReference>
<dbReference type="Pfam" id="PF12894">
    <property type="entry name" value="ANAPC4_WD40"/>
    <property type="match status" value="1"/>
</dbReference>
<dbReference type="Pfam" id="PF00400">
    <property type="entry name" value="WD40"/>
    <property type="match status" value="1"/>
</dbReference>
<dbReference type="SMART" id="SM00320">
    <property type="entry name" value="WD40"/>
    <property type="match status" value="4"/>
</dbReference>
<dbReference type="SUPFAM" id="SSF50978">
    <property type="entry name" value="WD40 repeat-like"/>
    <property type="match status" value="1"/>
</dbReference>
<dbReference type="PROSITE" id="PS00678">
    <property type="entry name" value="WD_REPEATS_1"/>
    <property type="match status" value="1"/>
</dbReference>
<dbReference type="PROSITE" id="PS50082">
    <property type="entry name" value="WD_REPEATS_2"/>
    <property type="match status" value="1"/>
</dbReference>
<dbReference type="PROSITE" id="PS50294">
    <property type="entry name" value="WD_REPEATS_REGION"/>
    <property type="match status" value="1"/>
</dbReference>
<evidence type="ECO:0000250" key="1">
    <source>
        <dbReference type="UniProtKB" id="Q15291"/>
    </source>
</evidence>
<evidence type="ECO:0000255" key="2"/>
<evidence type="ECO:0000256" key="3">
    <source>
        <dbReference type="SAM" id="MobiDB-lite"/>
    </source>
</evidence>
<evidence type="ECO:0000312" key="4">
    <source>
        <dbReference type="dictyBase" id="DDB_G0285847"/>
    </source>
</evidence>
<proteinExistence type="inferred from homology"/>
<comment type="function">
    <text evidence="1">Involved in mono-, di- and trimethylation at 'Lys-4' of histone H3. Histone H3 'Lys-4' methylation represents a specific tag for epigenetic transcriptional activation.</text>
</comment>
<comment type="subcellular location">
    <subcellularLocation>
        <location evidence="1">Nucleus</location>
    </subcellularLocation>
</comment>
<gene>
    <name evidence="4" type="primary">rbbE</name>
    <name evidence="4" type="ORF">DDB0191415</name>
</gene>
<sequence>MNLCLIDPFKQSDVPETVEYYLVDPKNIKSNCASFNRRGTLLAVGCASPIGKILVWDFDTKKIVRTLYHHTGCVNSISWSRNGKKLLTASNDGSLVLWDLATSKILYSLELESPILFAEFHPRNNDLCLIVLQKGTDPILLNFKSSEKTPLNIKSLVTSYIKREENSTGVIPTSVNSNYNGVATFASFNRRGEKIFFGDSCGMISVLDFKSMTIDRQFKVASSNTTVKQIEFSRNHRFMLVSSSDKVLRLISLESTNLYQQMREYQDSVNRMHWKKCCFSSNNEYVVGGMNHKSIHSIFIWSVSGSLVKDLEGPKEGLVDVVWHPLRPIIVSISFTGVIYVWTAYFEENWSSFAPDFQELEENLDYVEDEDEFDAKDSDNENQEVNNNNNNNIGRNPYKKIKTQQELNDKNSEEEEFVDVDHNDRITEFSSDEEEDLFCFSAIDDRYVSNVKFDDPRHPLYEKYQKDKEDSSSTTSNSTISSSSSPSPSSSSTTTTTTTSQKKDETQKKEKSTKKERNSDSKKRK</sequence>
<organism>
    <name type="scientific">Dictyostelium discoideum</name>
    <name type="common">Social amoeba</name>
    <dbReference type="NCBI Taxonomy" id="44689"/>
    <lineage>
        <taxon>Eukaryota</taxon>
        <taxon>Amoebozoa</taxon>
        <taxon>Evosea</taxon>
        <taxon>Eumycetozoa</taxon>
        <taxon>Dictyostelia</taxon>
        <taxon>Dictyosteliales</taxon>
        <taxon>Dictyosteliaceae</taxon>
        <taxon>Dictyostelium</taxon>
    </lineage>
</organism>
<feature type="chain" id="PRO_0000431812" description="Retinoblastoma-binding-like protein E">
    <location>
        <begin position="1"/>
        <end position="525"/>
    </location>
</feature>
<feature type="repeat" description="WD 1" evidence="2">
    <location>
        <begin position="25"/>
        <end position="66"/>
    </location>
</feature>
<feature type="repeat" description="WD 2" evidence="2">
    <location>
        <begin position="69"/>
        <end position="108"/>
    </location>
</feature>
<feature type="repeat" description="WD 3" evidence="2">
    <location>
        <begin position="222"/>
        <end position="261"/>
    </location>
</feature>
<feature type="repeat" description="WD 4" evidence="2">
    <location>
        <begin position="267"/>
        <end position="312"/>
    </location>
</feature>
<feature type="repeat" description="WD 5" evidence="2">
    <location>
        <begin position="313"/>
        <end position="352"/>
    </location>
</feature>
<feature type="region of interest" description="Disordered" evidence="3">
    <location>
        <begin position="371"/>
        <end position="398"/>
    </location>
</feature>
<feature type="region of interest" description="Disordered" evidence="3">
    <location>
        <begin position="462"/>
        <end position="525"/>
    </location>
</feature>
<feature type="compositionally biased region" description="Low complexity" evidence="3">
    <location>
        <begin position="383"/>
        <end position="392"/>
    </location>
</feature>
<feature type="compositionally biased region" description="Basic and acidic residues" evidence="3">
    <location>
        <begin position="462"/>
        <end position="471"/>
    </location>
</feature>
<feature type="compositionally biased region" description="Low complexity" evidence="3">
    <location>
        <begin position="472"/>
        <end position="500"/>
    </location>
</feature>
<feature type="compositionally biased region" description="Basic and acidic residues" evidence="3">
    <location>
        <begin position="501"/>
        <end position="525"/>
    </location>
</feature>
<name>RBBE_DICDI</name>
<protein>
    <recommendedName>
        <fullName>Retinoblastoma-binding-like protein E</fullName>
    </recommendedName>
</protein>
<keyword id="KW-0539">Nucleus</keyword>
<keyword id="KW-1185">Reference proteome</keyword>
<keyword id="KW-0677">Repeat</keyword>
<keyword id="KW-0804">Transcription</keyword>
<keyword id="KW-0805">Transcription regulation</keyword>
<keyword id="KW-0853">WD repeat</keyword>